<proteinExistence type="inferred from homology"/>
<reference key="1">
    <citation type="journal article" date="2009" name="Environ. Microbiol.">
        <title>Contribution of mobile genetic elements to Desulfovibrio vulgaris genome plasticity.</title>
        <authorList>
            <person name="Walker C.B."/>
            <person name="Stolyar S."/>
            <person name="Chivian D."/>
            <person name="Pinel N."/>
            <person name="Gabster J.A."/>
            <person name="Dehal P.S."/>
            <person name="He Z."/>
            <person name="Yang Z.K."/>
            <person name="Yen H.C."/>
            <person name="Zhou J."/>
            <person name="Wall J.D."/>
            <person name="Hazen T.C."/>
            <person name="Arkin A.P."/>
            <person name="Stahl D.A."/>
        </authorList>
    </citation>
    <scope>NUCLEOTIDE SEQUENCE [LARGE SCALE GENOMIC DNA]</scope>
    <source>
        <strain>DP4</strain>
    </source>
</reference>
<dbReference type="EMBL" id="CP000527">
    <property type="protein sequence ID" value="ABM29920.1"/>
    <property type="molecule type" value="Genomic_DNA"/>
</dbReference>
<dbReference type="RefSeq" id="WP_010937363.1">
    <property type="nucleotide sequence ID" value="NC_008751.1"/>
</dbReference>
<dbReference type="SMR" id="A1VHK4"/>
<dbReference type="KEGG" id="dvl:Dvul_2909"/>
<dbReference type="HOGENOM" id="CLU_038009_1_2_7"/>
<dbReference type="Proteomes" id="UP000009173">
    <property type="component" value="Chromosome"/>
</dbReference>
<dbReference type="GO" id="GO:0005829">
    <property type="term" value="C:cytosol"/>
    <property type="evidence" value="ECO:0007669"/>
    <property type="project" value="TreeGrafter"/>
</dbReference>
<dbReference type="GO" id="GO:0005886">
    <property type="term" value="C:plasma membrane"/>
    <property type="evidence" value="ECO:0007669"/>
    <property type="project" value="UniProtKB-SubCell"/>
</dbReference>
<dbReference type="GO" id="GO:0005525">
    <property type="term" value="F:GTP binding"/>
    <property type="evidence" value="ECO:0007669"/>
    <property type="project" value="UniProtKB-UniRule"/>
</dbReference>
<dbReference type="GO" id="GO:0003924">
    <property type="term" value="F:GTPase activity"/>
    <property type="evidence" value="ECO:0007669"/>
    <property type="project" value="UniProtKB-UniRule"/>
</dbReference>
<dbReference type="GO" id="GO:0043024">
    <property type="term" value="F:ribosomal small subunit binding"/>
    <property type="evidence" value="ECO:0007669"/>
    <property type="project" value="TreeGrafter"/>
</dbReference>
<dbReference type="GO" id="GO:0070181">
    <property type="term" value="F:small ribosomal subunit rRNA binding"/>
    <property type="evidence" value="ECO:0007669"/>
    <property type="project" value="UniProtKB-UniRule"/>
</dbReference>
<dbReference type="GO" id="GO:0000028">
    <property type="term" value="P:ribosomal small subunit assembly"/>
    <property type="evidence" value="ECO:0007669"/>
    <property type="project" value="TreeGrafter"/>
</dbReference>
<dbReference type="CDD" id="cd04163">
    <property type="entry name" value="Era"/>
    <property type="match status" value="1"/>
</dbReference>
<dbReference type="CDD" id="cd22534">
    <property type="entry name" value="KH-II_Era"/>
    <property type="match status" value="1"/>
</dbReference>
<dbReference type="FunFam" id="3.30.300.20:FF:000003">
    <property type="entry name" value="GTPase Era"/>
    <property type="match status" value="1"/>
</dbReference>
<dbReference type="Gene3D" id="3.30.300.20">
    <property type="match status" value="1"/>
</dbReference>
<dbReference type="Gene3D" id="3.40.50.300">
    <property type="entry name" value="P-loop containing nucleotide triphosphate hydrolases"/>
    <property type="match status" value="1"/>
</dbReference>
<dbReference type="HAMAP" id="MF_00367">
    <property type="entry name" value="GTPase_Era"/>
    <property type="match status" value="1"/>
</dbReference>
<dbReference type="InterPro" id="IPR030388">
    <property type="entry name" value="G_ERA_dom"/>
</dbReference>
<dbReference type="InterPro" id="IPR006073">
    <property type="entry name" value="GTP-bd"/>
</dbReference>
<dbReference type="InterPro" id="IPR005662">
    <property type="entry name" value="GTPase_Era-like"/>
</dbReference>
<dbReference type="InterPro" id="IPR015946">
    <property type="entry name" value="KH_dom-like_a/b"/>
</dbReference>
<dbReference type="InterPro" id="IPR004044">
    <property type="entry name" value="KH_dom_type_2"/>
</dbReference>
<dbReference type="InterPro" id="IPR009019">
    <property type="entry name" value="KH_sf_prok-type"/>
</dbReference>
<dbReference type="InterPro" id="IPR027417">
    <property type="entry name" value="P-loop_NTPase"/>
</dbReference>
<dbReference type="InterPro" id="IPR005225">
    <property type="entry name" value="Small_GTP-bd"/>
</dbReference>
<dbReference type="NCBIfam" id="TIGR00436">
    <property type="entry name" value="era"/>
    <property type="match status" value="1"/>
</dbReference>
<dbReference type="NCBIfam" id="NF000908">
    <property type="entry name" value="PRK00089.1"/>
    <property type="match status" value="1"/>
</dbReference>
<dbReference type="NCBIfam" id="TIGR00231">
    <property type="entry name" value="small_GTP"/>
    <property type="match status" value="1"/>
</dbReference>
<dbReference type="PANTHER" id="PTHR42698">
    <property type="entry name" value="GTPASE ERA"/>
    <property type="match status" value="1"/>
</dbReference>
<dbReference type="PANTHER" id="PTHR42698:SF1">
    <property type="entry name" value="GTPASE ERA, MITOCHONDRIAL"/>
    <property type="match status" value="1"/>
</dbReference>
<dbReference type="Pfam" id="PF07650">
    <property type="entry name" value="KH_2"/>
    <property type="match status" value="1"/>
</dbReference>
<dbReference type="Pfam" id="PF01926">
    <property type="entry name" value="MMR_HSR1"/>
    <property type="match status" value="1"/>
</dbReference>
<dbReference type="SUPFAM" id="SSF52540">
    <property type="entry name" value="P-loop containing nucleoside triphosphate hydrolases"/>
    <property type="match status" value="1"/>
</dbReference>
<dbReference type="SUPFAM" id="SSF54814">
    <property type="entry name" value="Prokaryotic type KH domain (KH-domain type II)"/>
    <property type="match status" value="1"/>
</dbReference>
<dbReference type="PROSITE" id="PS51713">
    <property type="entry name" value="G_ERA"/>
    <property type="match status" value="1"/>
</dbReference>
<dbReference type="PROSITE" id="PS50823">
    <property type="entry name" value="KH_TYPE_2"/>
    <property type="match status" value="1"/>
</dbReference>
<evidence type="ECO:0000255" key="1">
    <source>
        <dbReference type="HAMAP-Rule" id="MF_00367"/>
    </source>
</evidence>
<evidence type="ECO:0000255" key="2">
    <source>
        <dbReference type="PROSITE-ProRule" id="PRU01050"/>
    </source>
</evidence>
<keyword id="KW-0997">Cell inner membrane</keyword>
<keyword id="KW-1003">Cell membrane</keyword>
<keyword id="KW-0963">Cytoplasm</keyword>
<keyword id="KW-0342">GTP-binding</keyword>
<keyword id="KW-0472">Membrane</keyword>
<keyword id="KW-0547">Nucleotide-binding</keyword>
<keyword id="KW-0690">Ribosome biogenesis</keyword>
<keyword id="KW-0694">RNA-binding</keyword>
<keyword id="KW-0699">rRNA-binding</keyword>
<feature type="chain" id="PRO_1000079684" description="GTPase Era">
    <location>
        <begin position="1"/>
        <end position="308"/>
    </location>
</feature>
<feature type="domain" description="Era-type G" evidence="2">
    <location>
        <begin position="7"/>
        <end position="181"/>
    </location>
</feature>
<feature type="domain" description="KH type-2" evidence="1">
    <location>
        <begin position="212"/>
        <end position="290"/>
    </location>
</feature>
<feature type="region of interest" description="G1" evidence="2">
    <location>
        <begin position="15"/>
        <end position="22"/>
    </location>
</feature>
<feature type="region of interest" description="G2" evidence="2">
    <location>
        <begin position="41"/>
        <end position="45"/>
    </location>
</feature>
<feature type="region of interest" description="G3" evidence="2">
    <location>
        <begin position="62"/>
        <end position="65"/>
    </location>
</feature>
<feature type="region of interest" description="G4" evidence="2">
    <location>
        <begin position="130"/>
        <end position="133"/>
    </location>
</feature>
<feature type="region of interest" description="G5" evidence="2">
    <location>
        <begin position="160"/>
        <end position="162"/>
    </location>
</feature>
<feature type="binding site" evidence="1">
    <location>
        <begin position="15"/>
        <end position="22"/>
    </location>
    <ligand>
        <name>GTP</name>
        <dbReference type="ChEBI" id="CHEBI:37565"/>
    </ligand>
</feature>
<feature type="binding site" evidence="1">
    <location>
        <begin position="62"/>
        <end position="66"/>
    </location>
    <ligand>
        <name>GTP</name>
        <dbReference type="ChEBI" id="CHEBI:37565"/>
    </ligand>
</feature>
<feature type="binding site" evidence="1">
    <location>
        <begin position="130"/>
        <end position="133"/>
    </location>
    <ligand>
        <name>GTP</name>
        <dbReference type="ChEBI" id="CHEBI:37565"/>
    </ligand>
</feature>
<sequence length="308" mass="34616">MNQTTHRCGWVALIGPPNAGKSTLLNALIGQKVAIVTSKPQTTRNQIVGILSRKDAQVVFMDTPGIHQLRGRLNKMLLQTAWQSMNAADALIVMLDGDLYIRKPDLLDRDIAPLVEPIAAETRPVVVVVNKIDLFRDKSKMLPLLERLSAMWPKAEVFPASALNKDGMDHLLRLIVGYMPEGPALYPEDQISTLPVRFMTAEIVREKVFNKLRQELPYSTAVDIEQWEEEEGRDQVIVNAVIYVARPSHKSMVIGKGGATIKEIGIEARKDIQELLEKRVHLELWVKVREGWTEDLGFMRSLGLSPDE</sequence>
<protein>
    <recommendedName>
        <fullName evidence="1">GTPase Era</fullName>
    </recommendedName>
</protein>
<gene>
    <name evidence="1" type="primary">era</name>
    <name type="ordered locus">Dvul_2909</name>
</gene>
<comment type="function">
    <text evidence="1">An essential GTPase that binds both GDP and GTP, with rapid nucleotide exchange. Plays a role in 16S rRNA processing and 30S ribosomal subunit biogenesis and possibly also in cell cycle regulation and energy metabolism.</text>
</comment>
<comment type="subunit">
    <text evidence="1">Monomer.</text>
</comment>
<comment type="subcellular location">
    <subcellularLocation>
        <location>Cytoplasm</location>
    </subcellularLocation>
    <subcellularLocation>
        <location evidence="1">Cell inner membrane</location>
        <topology evidence="1">Peripheral membrane protein</topology>
    </subcellularLocation>
</comment>
<comment type="similarity">
    <text evidence="1 2">Belongs to the TRAFAC class TrmE-Era-EngA-EngB-Septin-like GTPase superfamily. Era GTPase family.</text>
</comment>
<organism>
    <name type="scientific">Nitratidesulfovibrio vulgaris (strain DP4)</name>
    <name type="common">Desulfovibrio vulgaris</name>
    <dbReference type="NCBI Taxonomy" id="391774"/>
    <lineage>
        <taxon>Bacteria</taxon>
        <taxon>Pseudomonadati</taxon>
        <taxon>Thermodesulfobacteriota</taxon>
        <taxon>Desulfovibrionia</taxon>
        <taxon>Desulfovibrionales</taxon>
        <taxon>Desulfovibrionaceae</taxon>
        <taxon>Nitratidesulfovibrio</taxon>
    </lineage>
</organism>
<name>ERA_NITV4</name>
<accession>A1VHK4</accession>